<accession>B3CT11</accession>
<sequence>MGQKVNPCIFRTGPNLPRNWESVLYANKNNYSDFLLKILKIRKIINTEYSFAQITKILIEWPSSKNIVVNIYAKKIGVIIGKSGGDIEKLKQNIAKITSADVSINICEVKKPELEEAFIAQTIAQQLERRQSFKKVMKKAIHASMKQGAKGIKIICSGRLGGVEIARSESYKEGRVPLQTIRADIRYAFAEAITTYGVIGVKVWVYRCDVNQSRINEVK</sequence>
<name>RS3_ORITI</name>
<feature type="chain" id="PRO_1000140998" description="Small ribosomal subunit protein uS3">
    <location>
        <begin position="1"/>
        <end position="219"/>
    </location>
</feature>
<feature type="domain" description="KH type-2" evidence="1">
    <location>
        <begin position="41"/>
        <end position="110"/>
    </location>
</feature>
<proteinExistence type="inferred from homology"/>
<protein>
    <recommendedName>
        <fullName evidence="1">Small ribosomal subunit protein uS3</fullName>
    </recommendedName>
    <alternativeName>
        <fullName evidence="2">30S ribosomal protein S3</fullName>
    </alternativeName>
</protein>
<gene>
    <name evidence="1" type="primary">rpsC</name>
    <name type="ordered locus">OTT_1050</name>
</gene>
<comment type="function">
    <text evidence="1">Binds the lower part of the 30S subunit head. Binds mRNA in the 70S ribosome, positioning it for translation.</text>
</comment>
<comment type="subunit">
    <text evidence="1">Part of the 30S ribosomal subunit. Forms a tight complex with proteins S10 and S14.</text>
</comment>
<comment type="similarity">
    <text evidence="1">Belongs to the universal ribosomal protein uS3 family.</text>
</comment>
<dbReference type="EMBL" id="AP008981">
    <property type="protein sequence ID" value="BAG40508.1"/>
    <property type="molecule type" value="Genomic_DNA"/>
</dbReference>
<dbReference type="RefSeq" id="WP_012461611.1">
    <property type="nucleotide sequence ID" value="NC_010793.1"/>
</dbReference>
<dbReference type="SMR" id="B3CT11"/>
<dbReference type="KEGG" id="ott:OTT_1050"/>
<dbReference type="HOGENOM" id="CLU_058591_0_2_5"/>
<dbReference type="OrthoDB" id="9806396at2"/>
<dbReference type="Proteomes" id="UP000001033">
    <property type="component" value="Chromosome"/>
</dbReference>
<dbReference type="GO" id="GO:0022627">
    <property type="term" value="C:cytosolic small ribosomal subunit"/>
    <property type="evidence" value="ECO:0007669"/>
    <property type="project" value="TreeGrafter"/>
</dbReference>
<dbReference type="GO" id="GO:0003729">
    <property type="term" value="F:mRNA binding"/>
    <property type="evidence" value="ECO:0007669"/>
    <property type="project" value="UniProtKB-UniRule"/>
</dbReference>
<dbReference type="GO" id="GO:0019843">
    <property type="term" value="F:rRNA binding"/>
    <property type="evidence" value="ECO:0007669"/>
    <property type="project" value="UniProtKB-UniRule"/>
</dbReference>
<dbReference type="GO" id="GO:0003735">
    <property type="term" value="F:structural constituent of ribosome"/>
    <property type="evidence" value="ECO:0007669"/>
    <property type="project" value="InterPro"/>
</dbReference>
<dbReference type="GO" id="GO:0006412">
    <property type="term" value="P:translation"/>
    <property type="evidence" value="ECO:0007669"/>
    <property type="project" value="UniProtKB-UniRule"/>
</dbReference>
<dbReference type="CDD" id="cd02412">
    <property type="entry name" value="KH-II_30S_S3"/>
    <property type="match status" value="1"/>
</dbReference>
<dbReference type="FunFam" id="3.30.300.20:FF:000001">
    <property type="entry name" value="30S ribosomal protein S3"/>
    <property type="match status" value="1"/>
</dbReference>
<dbReference type="Gene3D" id="3.30.300.20">
    <property type="match status" value="1"/>
</dbReference>
<dbReference type="Gene3D" id="3.30.1140.32">
    <property type="entry name" value="Ribosomal protein S3, C-terminal domain"/>
    <property type="match status" value="1"/>
</dbReference>
<dbReference type="HAMAP" id="MF_01309_B">
    <property type="entry name" value="Ribosomal_uS3_B"/>
    <property type="match status" value="1"/>
</dbReference>
<dbReference type="InterPro" id="IPR015946">
    <property type="entry name" value="KH_dom-like_a/b"/>
</dbReference>
<dbReference type="InterPro" id="IPR004044">
    <property type="entry name" value="KH_dom_type_2"/>
</dbReference>
<dbReference type="InterPro" id="IPR009019">
    <property type="entry name" value="KH_sf_prok-type"/>
</dbReference>
<dbReference type="InterPro" id="IPR036419">
    <property type="entry name" value="Ribosomal_S3_C_sf"/>
</dbReference>
<dbReference type="InterPro" id="IPR005704">
    <property type="entry name" value="Ribosomal_uS3_bac-typ"/>
</dbReference>
<dbReference type="InterPro" id="IPR001351">
    <property type="entry name" value="Ribosomal_uS3_C"/>
</dbReference>
<dbReference type="NCBIfam" id="TIGR01009">
    <property type="entry name" value="rpsC_bact"/>
    <property type="match status" value="1"/>
</dbReference>
<dbReference type="PANTHER" id="PTHR11760">
    <property type="entry name" value="30S/40S RIBOSOMAL PROTEIN S3"/>
    <property type="match status" value="1"/>
</dbReference>
<dbReference type="PANTHER" id="PTHR11760:SF19">
    <property type="entry name" value="SMALL RIBOSOMAL SUBUNIT PROTEIN US3C"/>
    <property type="match status" value="1"/>
</dbReference>
<dbReference type="Pfam" id="PF07650">
    <property type="entry name" value="KH_2"/>
    <property type="match status" value="1"/>
</dbReference>
<dbReference type="Pfam" id="PF00189">
    <property type="entry name" value="Ribosomal_S3_C"/>
    <property type="match status" value="1"/>
</dbReference>
<dbReference type="SUPFAM" id="SSF54814">
    <property type="entry name" value="Prokaryotic type KH domain (KH-domain type II)"/>
    <property type="match status" value="1"/>
</dbReference>
<dbReference type="SUPFAM" id="SSF54821">
    <property type="entry name" value="Ribosomal protein S3 C-terminal domain"/>
    <property type="match status" value="1"/>
</dbReference>
<dbReference type="PROSITE" id="PS50823">
    <property type="entry name" value="KH_TYPE_2"/>
    <property type="match status" value="1"/>
</dbReference>
<organism>
    <name type="scientific">Orientia tsutsugamushi (strain Ikeda)</name>
    <name type="common">Rickettsia tsutsugamushi</name>
    <dbReference type="NCBI Taxonomy" id="334380"/>
    <lineage>
        <taxon>Bacteria</taxon>
        <taxon>Pseudomonadati</taxon>
        <taxon>Pseudomonadota</taxon>
        <taxon>Alphaproteobacteria</taxon>
        <taxon>Rickettsiales</taxon>
        <taxon>Rickettsiaceae</taxon>
        <taxon>Rickettsieae</taxon>
        <taxon>Orientia</taxon>
    </lineage>
</organism>
<keyword id="KW-0687">Ribonucleoprotein</keyword>
<keyword id="KW-0689">Ribosomal protein</keyword>
<keyword id="KW-0694">RNA-binding</keyword>
<keyword id="KW-0699">rRNA-binding</keyword>
<reference key="1">
    <citation type="journal article" date="2008" name="DNA Res.">
        <title>The whole-genome sequencing of the obligate intracellular bacterium Orientia tsutsugamushi revealed massive gene amplification during reductive genome evolution.</title>
        <authorList>
            <person name="Nakayama K."/>
            <person name="Yamashita A."/>
            <person name="Kurokawa K."/>
            <person name="Morimoto T."/>
            <person name="Ogawa M."/>
            <person name="Fukuhara M."/>
            <person name="Urakami H."/>
            <person name="Ohnishi M."/>
            <person name="Uchiyama I."/>
            <person name="Ogura Y."/>
            <person name="Ooka T."/>
            <person name="Oshima K."/>
            <person name="Tamura A."/>
            <person name="Hattori M."/>
            <person name="Hayashi T."/>
        </authorList>
    </citation>
    <scope>NUCLEOTIDE SEQUENCE [LARGE SCALE GENOMIC DNA]</scope>
    <source>
        <strain>Ikeda</strain>
    </source>
</reference>
<evidence type="ECO:0000255" key="1">
    <source>
        <dbReference type="HAMAP-Rule" id="MF_01309"/>
    </source>
</evidence>
<evidence type="ECO:0000305" key="2"/>